<reference key="1">
    <citation type="journal article" date="2002" name="Proc. Natl. Acad. Sci. U.S.A.">
        <title>The genome sequence of Bifidobacterium longum reflects its adaptation to the human gastrointestinal tract.</title>
        <authorList>
            <person name="Schell M.A."/>
            <person name="Karmirantzou M."/>
            <person name="Snel B."/>
            <person name="Vilanova D."/>
            <person name="Berger B."/>
            <person name="Pessi G."/>
            <person name="Zwahlen M.-C."/>
            <person name="Desiere F."/>
            <person name="Bork P."/>
            <person name="Delley M."/>
            <person name="Pridmore R.D."/>
            <person name="Arigoni F."/>
        </authorList>
    </citation>
    <scope>NUCLEOTIDE SEQUENCE [LARGE SCALE GENOMIC DNA]</scope>
    <source>
        <strain>NCC 2705</strain>
    </source>
</reference>
<sequence length="467" mass="50139">MGTTLAEKVWADHLVRKGSDGAPDLLYIDLMLMHEVTSPQAFEGLRLAGRKPRHVDQLIATEDHNTPTVDIDRPNPDETSALQLTTLEKNCKEFGVRLHPLGDADQGIVHAFAPILGLTQPGMTIVCGDSHTSTHGAFGALAFGIGTSEVEHVMATQTLSLKPFKTMAVNVNGKLPADATAKDIILAIIAKIGTGGGQGYVIEYRGEAIRNLTMDERMTVCNMSIEAGARAGMIAPDETTFEYLKGRPHAPEGELWDQAVAYWKTLKTDDDAVFDKVVDIDATKLGPYVTWGTNPGQGLPITASVPEPGKIADATKRAAAERAITYMGLKPGMPIKDIAVDTVFIGSCTNGRIDDLRQAAAIMKGHRKAENIHRVLVVPASSRVRLQAEKEGLDKVFKDFGAEWRNAGCSMCLGMNPDKLVPNERSISTSNRNFEGRQGKGSRTHLASPAVAAATAIRGTISSPADL</sequence>
<feature type="chain" id="PRO_0000076705" description="3-isopropylmalate dehydratase large subunit">
    <location>
        <begin position="1"/>
        <end position="467"/>
    </location>
</feature>
<feature type="region of interest" description="Disordered" evidence="2">
    <location>
        <begin position="423"/>
        <end position="448"/>
    </location>
</feature>
<feature type="binding site" evidence="1">
    <location>
        <position position="348"/>
    </location>
    <ligand>
        <name>[4Fe-4S] cluster</name>
        <dbReference type="ChEBI" id="CHEBI:49883"/>
    </ligand>
</feature>
<feature type="binding site" evidence="1">
    <location>
        <position position="409"/>
    </location>
    <ligand>
        <name>[4Fe-4S] cluster</name>
        <dbReference type="ChEBI" id="CHEBI:49883"/>
    </ligand>
</feature>
<feature type="binding site" evidence="1">
    <location>
        <position position="412"/>
    </location>
    <ligand>
        <name>[4Fe-4S] cluster</name>
        <dbReference type="ChEBI" id="CHEBI:49883"/>
    </ligand>
</feature>
<keyword id="KW-0004">4Fe-4S</keyword>
<keyword id="KW-0028">Amino-acid biosynthesis</keyword>
<keyword id="KW-0100">Branched-chain amino acid biosynthesis</keyword>
<keyword id="KW-0408">Iron</keyword>
<keyword id="KW-0411">Iron-sulfur</keyword>
<keyword id="KW-0432">Leucine biosynthesis</keyword>
<keyword id="KW-0456">Lyase</keyword>
<keyword id="KW-0479">Metal-binding</keyword>
<keyword id="KW-1185">Reference proteome</keyword>
<name>LEUC_BIFLO</name>
<evidence type="ECO:0000255" key="1">
    <source>
        <dbReference type="HAMAP-Rule" id="MF_01026"/>
    </source>
</evidence>
<evidence type="ECO:0000256" key="2">
    <source>
        <dbReference type="SAM" id="MobiDB-lite"/>
    </source>
</evidence>
<proteinExistence type="inferred from homology"/>
<gene>
    <name evidence="1" type="primary">leuC</name>
    <name type="ordered locus">BL1262</name>
</gene>
<comment type="function">
    <text evidence="1">Catalyzes the isomerization between 2-isopropylmalate and 3-isopropylmalate, via the formation of 2-isopropylmaleate.</text>
</comment>
<comment type="catalytic activity">
    <reaction evidence="1">
        <text>(2R,3S)-3-isopropylmalate = (2S)-2-isopropylmalate</text>
        <dbReference type="Rhea" id="RHEA:32287"/>
        <dbReference type="ChEBI" id="CHEBI:1178"/>
        <dbReference type="ChEBI" id="CHEBI:35121"/>
        <dbReference type="EC" id="4.2.1.33"/>
    </reaction>
</comment>
<comment type="cofactor">
    <cofactor evidence="1">
        <name>[4Fe-4S] cluster</name>
        <dbReference type="ChEBI" id="CHEBI:49883"/>
    </cofactor>
    <text evidence="1">Binds 1 [4Fe-4S] cluster per subunit.</text>
</comment>
<comment type="pathway">
    <text evidence="1">Amino-acid biosynthesis; L-leucine biosynthesis; L-leucine from 3-methyl-2-oxobutanoate: step 2/4.</text>
</comment>
<comment type="subunit">
    <text evidence="1">Heterodimer of LeuC and LeuD.</text>
</comment>
<comment type="similarity">
    <text evidence="1">Belongs to the aconitase/IPM isomerase family. LeuC type 1 subfamily.</text>
</comment>
<accession>Q8G4W2</accession>
<protein>
    <recommendedName>
        <fullName evidence="1">3-isopropylmalate dehydratase large subunit</fullName>
        <ecNumber evidence="1">4.2.1.33</ecNumber>
    </recommendedName>
    <alternativeName>
        <fullName evidence="1">Alpha-IPM isomerase</fullName>
        <shortName evidence="1">IPMI</shortName>
    </alternativeName>
    <alternativeName>
        <fullName evidence="1">Isopropylmalate isomerase</fullName>
    </alternativeName>
</protein>
<organism>
    <name type="scientific">Bifidobacterium longum (strain NCC 2705)</name>
    <dbReference type="NCBI Taxonomy" id="206672"/>
    <lineage>
        <taxon>Bacteria</taxon>
        <taxon>Bacillati</taxon>
        <taxon>Actinomycetota</taxon>
        <taxon>Actinomycetes</taxon>
        <taxon>Bifidobacteriales</taxon>
        <taxon>Bifidobacteriaceae</taxon>
        <taxon>Bifidobacterium</taxon>
    </lineage>
</organism>
<dbReference type="EC" id="4.2.1.33" evidence="1"/>
<dbReference type="EMBL" id="AE014295">
    <property type="protein sequence ID" value="AAN25063.1"/>
    <property type="molecule type" value="Genomic_DNA"/>
</dbReference>
<dbReference type="RefSeq" id="NP_696427.1">
    <property type="nucleotide sequence ID" value="NC_004307.2"/>
</dbReference>
<dbReference type="RefSeq" id="WP_007053084.1">
    <property type="nucleotide sequence ID" value="NC_004307.2"/>
</dbReference>
<dbReference type="SMR" id="Q8G4W2"/>
<dbReference type="STRING" id="206672.BL1262"/>
<dbReference type="EnsemblBacteria" id="AAN25063">
    <property type="protein sequence ID" value="AAN25063"/>
    <property type="gene ID" value="BL1262"/>
</dbReference>
<dbReference type="KEGG" id="blo:BL1262"/>
<dbReference type="PATRIC" id="fig|206672.9.peg.1548"/>
<dbReference type="HOGENOM" id="CLU_006714_3_4_11"/>
<dbReference type="OrthoDB" id="9802769at2"/>
<dbReference type="PhylomeDB" id="Q8G4W2"/>
<dbReference type="UniPathway" id="UPA00048">
    <property type="reaction ID" value="UER00071"/>
</dbReference>
<dbReference type="Proteomes" id="UP000000439">
    <property type="component" value="Chromosome"/>
</dbReference>
<dbReference type="GO" id="GO:0003861">
    <property type="term" value="F:3-isopropylmalate dehydratase activity"/>
    <property type="evidence" value="ECO:0007669"/>
    <property type="project" value="UniProtKB-UniRule"/>
</dbReference>
<dbReference type="GO" id="GO:0051539">
    <property type="term" value="F:4 iron, 4 sulfur cluster binding"/>
    <property type="evidence" value="ECO:0007669"/>
    <property type="project" value="UniProtKB-KW"/>
</dbReference>
<dbReference type="GO" id="GO:0046872">
    <property type="term" value="F:metal ion binding"/>
    <property type="evidence" value="ECO:0007669"/>
    <property type="project" value="UniProtKB-KW"/>
</dbReference>
<dbReference type="GO" id="GO:0009098">
    <property type="term" value="P:L-leucine biosynthetic process"/>
    <property type="evidence" value="ECO:0007669"/>
    <property type="project" value="UniProtKB-UniRule"/>
</dbReference>
<dbReference type="CDD" id="cd01583">
    <property type="entry name" value="IPMI"/>
    <property type="match status" value="1"/>
</dbReference>
<dbReference type="FunFam" id="3.30.499.10:FF:000007">
    <property type="entry name" value="3-isopropylmalate dehydratase large subunit"/>
    <property type="match status" value="1"/>
</dbReference>
<dbReference type="Gene3D" id="3.30.499.10">
    <property type="entry name" value="Aconitase, domain 3"/>
    <property type="match status" value="2"/>
</dbReference>
<dbReference type="HAMAP" id="MF_01026">
    <property type="entry name" value="LeuC_type1"/>
    <property type="match status" value="1"/>
</dbReference>
<dbReference type="InterPro" id="IPR004430">
    <property type="entry name" value="3-IsopropMal_deHydase_lsu"/>
</dbReference>
<dbReference type="InterPro" id="IPR015931">
    <property type="entry name" value="Acnase/IPM_dHydase_lsu_aba_1/3"/>
</dbReference>
<dbReference type="InterPro" id="IPR001030">
    <property type="entry name" value="Acoase/IPM_deHydtase_lsu_aba"/>
</dbReference>
<dbReference type="InterPro" id="IPR018136">
    <property type="entry name" value="Aconitase_4Fe-4S_BS"/>
</dbReference>
<dbReference type="InterPro" id="IPR036008">
    <property type="entry name" value="Aconitase_4Fe-4S_dom"/>
</dbReference>
<dbReference type="InterPro" id="IPR050067">
    <property type="entry name" value="IPM_dehydratase_rel_enz"/>
</dbReference>
<dbReference type="InterPro" id="IPR033941">
    <property type="entry name" value="IPMI_cat"/>
</dbReference>
<dbReference type="NCBIfam" id="TIGR00170">
    <property type="entry name" value="leuC"/>
    <property type="match status" value="1"/>
</dbReference>
<dbReference type="NCBIfam" id="NF004016">
    <property type="entry name" value="PRK05478.1"/>
    <property type="match status" value="1"/>
</dbReference>
<dbReference type="NCBIfam" id="NF009116">
    <property type="entry name" value="PRK12466.1"/>
    <property type="match status" value="1"/>
</dbReference>
<dbReference type="PANTHER" id="PTHR43822:SF9">
    <property type="entry name" value="3-ISOPROPYLMALATE DEHYDRATASE"/>
    <property type="match status" value="1"/>
</dbReference>
<dbReference type="PANTHER" id="PTHR43822">
    <property type="entry name" value="HOMOACONITASE, MITOCHONDRIAL-RELATED"/>
    <property type="match status" value="1"/>
</dbReference>
<dbReference type="Pfam" id="PF00330">
    <property type="entry name" value="Aconitase"/>
    <property type="match status" value="1"/>
</dbReference>
<dbReference type="PRINTS" id="PR00415">
    <property type="entry name" value="ACONITASE"/>
</dbReference>
<dbReference type="SUPFAM" id="SSF53732">
    <property type="entry name" value="Aconitase iron-sulfur domain"/>
    <property type="match status" value="1"/>
</dbReference>
<dbReference type="PROSITE" id="PS00450">
    <property type="entry name" value="ACONITASE_1"/>
    <property type="match status" value="1"/>
</dbReference>
<dbReference type="PROSITE" id="PS01244">
    <property type="entry name" value="ACONITASE_2"/>
    <property type="match status" value="1"/>
</dbReference>